<accession>A8AIH1</accession>
<evidence type="ECO:0000255" key="1">
    <source>
        <dbReference type="HAMAP-Rule" id="MF_00381"/>
    </source>
</evidence>
<sequence length="94" mass="10621">MTKSELIERLATQQSHIPAKAVEDAVKEMLEHMASTLAQGERIEIRGFGSFSLHYRAPRTGRNPKTGDKVELEGKYVPHFKPGKELRDRANIYG</sequence>
<organism>
    <name type="scientific">Citrobacter koseri (strain ATCC BAA-895 / CDC 4225-83 / SGSC4696)</name>
    <dbReference type="NCBI Taxonomy" id="290338"/>
    <lineage>
        <taxon>Bacteria</taxon>
        <taxon>Pseudomonadati</taxon>
        <taxon>Pseudomonadota</taxon>
        <taxon>Gammaproteobacteria</taxon>
        <taxon>Enterobacterales</taxon>
        <taxon>Enterobacteriaceae</taxon>
        <taxon>Citrobacter</taxon>
    </lineage>
</organism>
<name>IHFB_CITK8</name>
<keyword id="KW-0233">DNA recombination</keyword>
<keyword id="KW-0238">DNA-binding</keyword>
<keyword id="KW-1185">Reference proteome</keyword>
<keyword id="KW-0804">Transcription</keyword>
<keyword id="KW-0805">Transcription regulation</keyword>
<keyword id="KW-0810">Translation regulation</keyword>
<protein>
    <recommendedName>
        <fullName evidence="1">Integration host factor subunit beta</fullName>
        <shortName evidence="1">IHF-beta</shortName>
    </recommendedName>
</protein>
<comment type="function">
    <text evidence="1">This protein is one of the two subunits of integration host factor, a specific DNA-binding protein that functions in genetic recombination as well as in transcriptional and translational control.</text>
</comment>
<comment type="subunit">
    <text evidence="1">Heterodimer of an alpha and a beta chain.</text>
</comment>
<comment type="similarity">
    <text evidence="1">Belongs to the bacterial histone-like protein family.</text>
</comment>
<gene>
    <name evidence="1" type="primary">ihfB</name>
    <name evidence="1" type="synonym">himD</name>
    <name type="ordered locus">CKO_02160</name>
</gene>
<proteinExistence type="inferred from homology"/>
<dbReference type="EMBL" id="CP000822">
    <property type="protein sequence ID" value="ABV13284.1"/>
    <property type="molecule type" value="Genomic_DNA"/>
</dbReference>
<dbReference type="RefSeq" id="WP_000167332.1">
    <property type="nucleotide sequence ID" value="NC_009792.1"/>
</dbReference>
<dbReference type="SMR" id="A8AIH1"/>
<dbReference type="STRING" id="290338.CKO_02160"/>
<dbReference type="GeneID" id="84237116"/>
<dbReference type="KEGG" id="cko:CKO_02160"/>
<dbReference type="HOGENOM" id="CLU_105066_2_0_6"/>
<dbReference type="OrthoDB" id="9804203at2"/>
<dbReference type="Proteomes" id="UP000008148">
    <property type="component" value="Chromosome"/>
</dbReference>
<dbReference type="GO" id="GO:0005694">
    <property type="term" value="C:chromosome"/>
    <property type="evidence" value="ECO:0007669"/>
    <property type="project" value="InterPro"/>
</dbReference>
<dbReference type="GO" id="GO:0005829">
    <property type="term" value="C:cytosol"/>
    <property type="evidence" value="ECO:0007669"/>
    <property type="project" value="TreeGrafter"/>
</dbReference>
<dbReference type="GO" id="GO:0003677">
    <property type="term" value="F:DNA binding"/>
    <property type="evidence" value="ECO:0007669"/>
    <property type="project" value="UniProtKB-UniRule"/>
</dbReference>
<dbReference type="GO" id="GO:0030527">
    <property type="term" value="F:structural constituent of chromatin"/>
    <property type="evidence" value="ECO:0007669"/>
    <property type="project" value="InterPro"/>
</dbReference>
<dbReference type="GO" id="GO:0006310">
    <property type="term" value="P:DNA recombination"/>
    <property type="evidence" value="ECO:0007669"/>
    <property type="project" value="UniProtKB-UniRule"/>
</dbReference>
<dbReference type="GO" id="GO:0006355">
    <property type="term" value="P:regulation of DNA-templated transcription"/>
    <property type="evidence" value="ECO:0007669"/>
    <property type="project" value="UniProtKB-UniRule"/>
</dbReference>
<dbReference type="GO" id="GO:0006417">
    <property type="term" value="P:regulation of translation"/>
    <property type="evidence" value="ECO:0007669"/>
    <property type="project" value="UniProtKB-UniRule"/>
</dbReference>
<dbReference type="CDD" id="cd13836">
    <property type="entry name" value="IHF_B"/>
    <property type="match status" value="1"/>
</dbReference>
<dbReference type="FunFam" id="4.10.520.10:FF:000003">
    <property type="entry name" value="Integration host factor subunit beta"/>
    <property type="match status" value="1"/>
</dbReference>
<dbReference type="Gene3D" id="4.10.520.10">
    <property type="entry name" value="IHF-like DNA-binding proteins"/>
    <property type="match status" value="1"/>
</dbReference>
<dbReference type="HAMAP" id="MF_00381">
    <property type="entry name" value="IHF_beta"/>
    <property type="match status" value="1"/>
</dbReference>
<dbReference type="InterPro" id="IPR000119">
    <property type="entry name" value="Hist_DNA-bd"/>
</dbReference>
<dbReference type="InterPro" id="IPR020816">
    <property type="entry name" value="Histone-like_DNA-bd_CS"/>
</dbReference>
<dbReference type="InterPro" id="IPR010992">
    <property type="entry name" value="IHF-like_DNA-bd_dom_sf"/>
</dbReference>
<dbReference type="InterPro" id="IPR005685">
    <property type="entry name" value="IHF_beta"/>
</dbReference>
<dbReference type="NCBIfam" id="TIGR00988">
    <property type="entry name" value="hip"/>
    <property type="match status" value="1"/>
</dbReference>
<dbReference type="NCBIfam" id="NF001222">
    <property type="entry name" value="PRK00199.1"/>
    <property type="match status" value="1"/>
</dbReference>
<dbReference type="PANTHER" id="PTHR33175">
    <property type="entry name" value="DNA-BINDING PROTEIN HU"/>
    <property type="match status" value="1"/>
</dbReference>
<dbReference type="PANTHER" id="PTHR33175:SF5">
    <property type="entry name" value="INTEGRATION HOST FACTOR SUBUNIT BETA"/>
    <property type="match status" value="1"/>
</dbReference>
<dbReference type="Pfam" id="PF00216">
    <property type="entry name" value="Bac_DNA_binding"/>
    <property type="match status" value="1"/>
</dbReference>
<dbReference type="PRINTS" id="PR01727">
    <property type="entry name" value="DNABINDINGHU"/>
</dbReference>
<dbReference type="SMART" id="SM00411">
    <property type="entry name" value="BHL"/>
    <property type="match status" value="1"/>
</dbReference>
<dbReference type="SUPFAM" id="SSF47729">
    <property type="entry name" value="IHF-like DNA-binding proteins"/>
    <property type="match status" value="1"/>
</dbReference>
<dbReference type="PROSITE" id="PS00045">
    <property type="entry name" value="HISTONE_LIKE"/>
    <property type="match status" value="1"/>
</dbReference>
<feature type="chain" id="PRO_1000060595" description="Integration host factor subunit beta">
    <location>
        <begin position="1"/>
        <end position="94"/>
    </location>
</feature>
<reference key="1">
    <citation type="submission" date="2007-08" db="EMBL/GenBank/DDBJ databases">
        <authorList>
            <consortium name="The Citrobacter koseri Genome Sequencing Project"/>
            <person name="McClelland M."/>
            <person name="Sanderson E.K."/>
            <person name="Porwollik S."/>
            <person name="Spieth J."/>
            <person name="Clifton W.S."/>
            <person name="Latreille P."/>
            <person name="Courtney L."/>
            <person name="Wang C."/>
            <person name="Pepin K."/>
            <person name="Bhonagiri V."/>
            <person name="Nash W."/>
            <person name="Johnson M."/>
            <person name="Thiruvilangam P."/>
            <person name="Wilson R."/>
        </authorList>
    </citation>
    <scope>NUCLEOTIDE SEQUENCE [LARGE SCALE GENOMIC DNA]</scope>
    <source>
        <strain>ATCC BAA-895 / CDC 4225-83 / SGSC4696</strain>
    </source>
</reference>